<keyword id="KW-0342">GTP-binding</keyword>
<keyword id="KW-0418">Kinase</keyword>
<keyword id="KW-0496">Mitochondrion</keyword>
<keyword id="KW-0547">Nucleotide-binding</keyword>
<keyword id="KW-0808">Transferase</keyword>
<sequence>MKADAKQITHLLKPLRLLLLGAPGSGKGTQTSRLLKQIPQLSSISSGDILRQEIKSESTLGREATTYIAQGKLLPDDLITRLITFRLSALGWLKPSAMWLLDGFPRTTAQASALDELLKQHDASLNLVVELDVPESTILERIENRYVHVPSGRVYNLQYNPPKVPGLDDITGEPLTKRLDDTAEVFKKRLEEYKKTNEPLKDYYKKSGIFGTVSGETSDIIFPKLLNLITSKFG</sequence>
<protein>
    <recommendedName>
        <fullName evidence="1">GTP:AMP phosphotransferase, mitochondrial</fullName>
        <ecNumber evidence="1">2.7.4.10</ecNumber>
    </recommendedName>
    <alternativeName>
        <fullName evidence="1">Adenylate kinase 3</fullName>
        <shortName evidence="1">AK 3</shortName>
    </alternativeName>
</protein>
<feature type="chain" id="PRO_0000422161" description="GTP:AMP phosphotransferase, mitochondrial">
    <location>
        <begin position="1"/>
        <end position="234"/>
    </location>
</feature>
<feature type="region of interest" description="NMP" evidence="1">
    <location>
        <begin position="45"/>
        <end position="74"/>
    </location>
</feature>
<feature type="region of interest" description="LID" evidence="1">
    <location>
        <begin position="144"/>
        <end position="181"/>
    </location>
</feature>
<feature type="binding site" evidence="1">
    <location>
        <begin position="24"/>
        <end position="29"/>
    </location>
    <ligand>
        <name>GTP</name>
        <dbReference type="ChEBI" id="CHEBI:37565"/>
    </ligand>
</feature>
<feature type="binding site" evidence="1">
    <location>
        <position position="46"/>
    </location>
    <ligand>
        <name>AMP</name>
        <dbReference type="ChEBI" id="CHEBI:456215"/>
    </ligand>
</feature>
<feature type="binding site" evidence="1">
    <location>
        <position position="51"/>
    </location>
    <ligand>
        <name>AMP</name>
        <dbReference type="ChEBI" id="CHEBI:456215"/>
    </ligand>
</feature>
<feature type="binding site" evidence="1">
    <location>
        <begin position="72"/>
        <end position="74"/>
    </location>
    <ligand>
        <name>AMP</name>
        <dbReference type="ChEBI" id="CHEBI:456215"/>
    </ligand>
</feature>
<feature type="binding site" evidence="1">
    <location>
        <begin position="103"/>
        <end position="106"/>
    </location>
    <ligand>
        <name>AMP</name>
        <dbReference type="ChEBI" id="CHEBI:456215"/>
    </ligand>
</feature>
<feature type="binding site" evidence="1">
    <location>
        <position position="110"/>
    </location>
    <ligand>
        <name>AMP</name>
        <dbReference type="ChEBI" id="CHEBI:456215"/>
    </ligand>
</feature>
<feature type="binding site" evidence="1">
    <location>
        <position position="145"/>
    </location>
    <ligand>
        <name>GTP</name>
        <dbReference type="ChEBI" id="CHEBI:37565"/>
    </ligand>
</feature>
<feature type="binding site" evidence="1">
    <location>
        <begin position="154"/>
        <end position="155"/>
    </location>
    <ligand>
        <name>GTP</name>
        <dbReference type="ChEBI" id="CHEBI:37565"/>
    </ligand>
</feature>
<feature type="binding site" evidence="1">
    <location>
        <position position="178"/>
    </location>
    <ligand>
        <name>AMP</name>
        <dbReference type="ChEBI" id="CHEBI:456215"/>
    </ligand>
</feature>
<feature type="binding site" evidence="1">
    <location>
        <position position="189"/>
    </location>
    <ligand>
        <name>AMP</name>
        <dbReference type="ChEBI" id="CHEBI:456215"/>
    </ligand>
</feature>
<feature type="binding site" evidence="1">
    <location>
        <position position="218"/>
    </location>
    <ligand>
        <name>GTP</name>
        <dbReference type="ChEBI" id="CHEBI:37565"/>
    </ligand>
</feature>
<accession>E9P974</accession>
<evidence type="ECO:0000255" key="1">
    <source>
        <dbReference type="HAMAP-Rule" id="MF_03169"/>
    </source>
</evidence>
<evidence type="ECO:0000269" key="2">
    <source>
    </source>
</evidence>
<evidence type="ECO:0000269" key="3">
    <source>
    </source>
</evidence>
<evidence type="ECO:0000305" key="4">
    <source>
    </source>
</evidence>
<reference key="1">
    <citation type="journal article" date="2005" name="J. Biol. Chem.">
        <title>A GTP:AMP phosphotransferase, Adk2p, in Saccharomyces cerevisiae. Role of the C terminus in protein folding/stabilization, thermal tolerance, and enzymatic activity.</title>
        <authorList>
            <person name="Gu Y."/>
            <person name="Gordon D.M."/>
            <person name="Amutha B."/>
            <person name="Pain D."/>
        </authorList>
    </citation>
    <scope>NUCLEOTIDE SEQUENCE [GENOMIC DNA]</scope>
    <scope>FUNCTION</scope>
    <scope>BIOPHYSICOCHEMICAL PROPERTIES</scope>
    <source>
        <strain>ATCC 24657 / D273-10B</strain>
    </source>
</reference>
<reference key="2">
    <citation type="journal article" date="1995" name="J. Biol. Chem.">
        <title>Strain-dependent occurrence of functional GTP:AMP phosphotransferase (AK3) in Saccharomyces cerevisiae.</title>
        <authorList>
            <person name="Schricker R."/>
            <person name="Magdolen V."/>
            <person name="Strobel G."/>
            <person name="Bogengruber E."/>
            <person name="Breitenbach M."/>
            <person name="Bandlow W."/>
        </authorList>
    </citation>
    <scope>FUNCTION</scope>
    <scope>CATALYTIC ACTIVITY</scope>
    <scope>BIOPHYSICOCHEMICAL PROPERTIES</scope>
    <scope>SUBCELLULAR LOCATION</scope>
    <source>
        <strain>ATCC 24657 / D273-10B</strain>
    </source>
</reference>
<comment type="function">
    <text evidence="1 2 3">Involved in maintaining the homeostasis of cellular nucleotides by catalyzing the interconversion of nucleoside phosphates. Has GTP:AMP phosphotransferase and ITP:AMP phosphotransferase activities. Does not accept ATP as phosphate donor.</text>
</comment>
<comment type="catalytic activity">
    <reaction evidence="1 3">
        <text>a ribonucleoside 5'-triphosphate + AMP = a ribonucleoside 5'-diphosphate + ADP</text>
        <dbReference type="Rhea" id="RHEA:13749"/>
        <dbReference type="ChEBI" id="CHEBI:57930"/>
        <dbReference type="ChEBI" id="CHEBI:61557"/>
        <dbReference type="ChEBI" id="CHEBI:456215"/>
        <dbReference type="ChEBI" id="CHEBI:456216"/>
        <dbReference type="EC" id="2.7.4.10"/>
    </reaction>
</comment>
<comment type="biophysicochemical properties">
    <kinetics>
        <Vmax evidence="2 3">100.0 umol/min/mg enzyme for GTP</Vmax>
    </kinetics>
    <phDependence>
        <text evidence="2 3">Optimum pH is 8.5.</text>
    </phDependence>
    <temperatureDependence>
        <text evidence="2 3">Optimum temperature is 30 degrees Celsius. Active from 30 to 55 degrees Celsius.</text>
    </temperatureDependence>
</comment>
<comment type="subunit">
    <text evidence="1">Monomer.</text>
</comment>
<comment type="subcellular location">
    <subcellularLocation>
        <location evidence="1 3">Mitochondrion matrix</location>
    </subcellularLocation>
</comment>
<comment type="domain">
    <text evidence="1">Consists of three domains, a large central CORE domain and two small peripheral domains, NMPbind and LID, which undergo movements during catalysis. The LID domain closes over the site of phosphoryl transfer upon GTP binding. Assembling and disassembling the active center during each catalytic cycle provides an effective means to prevent GTP hydrolysis.</text>
</comment>
<comment type="miscellaneous">
    <text evidence="4">Depending on the yeast strain, the GTP:AMP phosphotransferase is encoded by ADK2 with or without a single base pair deletion/insertion near the 3' end of the open reading frame, resulting in a long or a short form. The ADK2 long form (this entry) is also referred to as AKY3, while the short form has been named PAK3. A sequence of the short form can be found in strain S288c (AC P26364). The modified C-terminus in the long form contributes to protein folding and is critical for protein stability.</text>
</comment>
<comment type="similarity">
    <text evidence="1">Belongs to the adenylate kinase family. AK3 subfamily.</text>
</comment>
<proteinExistence type="evidence at protein level"/>
<organism>
    <name type="scientific">Saccharomyces cerevisiae</name>
    <name type="common">Baker's yeast</name>
    <dbReference type="NCBI Taxonomy" id="4932"/>
    <lineage>
        <taxon>Eukaryota</taxon>
        <taxon>Fungi</taxon>
        <taxon>Dikarya</taxon>
        <taxon>Ascomycota</taxon>
        <taxon>Saccharomycotina</taxon>
        <taxon>Saccharomycetes</taxon>
        <taxon>Saccharomycetales</taxon>
        <taxon>Saccharomycetaceae</taxon>
        <taxon>Saccharomyces</taxon>
    </lineage>
</organism>
<dbReference type="EC" id="2.7.4.10" evidence="1"/>
<dbReference type="EMBL" id="AY949617">
    <property type="protein sequence ID" value="AAX51239.1"/>
    <property type="molecule type" value="Genomic_DNA"/>
</dbReference>
<dbReference type="SMR" id="E9P974"/>
<dbReference type="IntAct" id="E9P974">
    <property type="interactions" value="1"/>
</dbReference>
<dbReference type="VEuPathDB" id="FungiDB:YER170W"/>
<dbReference type="GO" id="GO:0005759">
    <property type="term" value="C:mitochondrial matrix"/>
    <property type="evidence" value="ECO:0007669"/>
    <property type="project" value="UniProtKB-SubCell"/>
</dbReference>
<dbReference type="GO" id="GO:0004017">
    <property type="term" value="F:adenylate kinase activity"/>
    <property type="evidence" value="ECO:0007669"/>
    <property type="project" value="InterPro"/>
</dbReference>
<dbReference type="GO" id="GO:0005524">
    <property type="term" value="F:ATP binding"/>
    <property type="evidence" value="ECO:0007669"/>
    <property type="project" value="InterPro"/>
</dbReference>
<dbReference type="GO" id="GO:0005525">
    <property type="term" value="F:GTP binding"/>
    <property type="evidence" value="ECO:0007669"/>
    <property type="project" value="UniProtKB-KW"/>
</dbReference>
<dbReference type="GO" id="GO:0046899">
    <property type="term" value="F:nucleoside triphosphate adenylate kinase activity"/>
    <property type="evidence" value="ECO:0007669"/>
    <property type="project" value="UniProtKB-UniRule"/>
</dbReference>
<dbReference type="GO" id="GO:0006172">
    <property type="term" value="P:ADP biosynthetic process"/>
    <property type="evidence" value="ECO:0007669"/>
    <property type="project" value="UniProtKB-UniRule"/>
</dbReference>
<dbReference type="GO" id="GO:0046033">
    <property type="term" value="P:AMP metabolic process"/>
    <property type="evidence" value="ECO:0007669"/>
    <property type="project" value="UniProtKB-UniRule"/>
</dbReference>
<dbReference type="GO" id="GO:0046039">
    <property type="term" value="P:GTP metabolic process"/>
    <property type="evidence" value="ECO:0007669"/>
    <property type="project" value="UniProtKB-UniRule"/>
</dbReference>
<dbReference type="GO" id="GO:0046041">
    <property type="term" value="P:ITP metabolic process"/>
    <property type="evidence" value="ECO:0007669"/>
    <property type="project" value="UniProtKB-UniRule"/>
</dbReference>
<dbReference type="CDD" id="cd01428">
    <property type="entry name" value="ADK"/>
    <property type="match status" value="1"/>
</dbReference>
<dbReference type="FunFam" id="3.40.50.300:FF:000106">
    <property type="entry name" value="Adenylate kinase mitochondrial"/>
    <property type="match status" value="1"/>
</dbReference>
<dbReference type="Gene3D" id="3.40.50.300">
    <property type="entry name" value="P-loop containing nucleotide triphosphate hydrolases"/>
    <property type="match status" value="1"/>
</dbReference>
<dbReference type="HAMAP" id="MF_00235">
    <property type="entry name" value="Adenylate_kinase_Adk"/>
    <property type="match status" value="1"/>
</dbReference>
<dbReference type="HAMAP" id="MF_03169">
    <property type="entry name" value="Adenylate_kinase_AK3"/>
    <property type="match status" value="1"/>
</dbReference>
<dbReference type="InterPro" id="IPR006259">
    <property type="entry name" value="Adenyl_kin_sub"/>
</dbReference>
<dbReference type="InterPro" id="IPR000850">
    <property type="entry name" value="Adenylat/UMP-CMP_kin"/>
</dbReference>
<dbReference type="InterPro" id="IPR033690">
    <property type="entry name" value="Adenylat_kinase_CS"/>
</dbReference>
<dbReference type="InterPro" id="IPR007862">
    <property type="entry name" value="Adenylate_kinase_lid-dom"/>
</dbReference>
<dbReference type="InterPro" id="IPR036193">
    <property type="entry name" value="ADK_active_lid_dom_sf"/>
</dbReference>
<dbReference type="InterPro" id="IPR028586">
    <property type="entry name" value="AK3/Ak4_mitochondrial"/>
</dbReference>
<dbReference type="InterPro" id="IPR027417">
    <property type="entry name" value="P-loop_NTPase"/>
</dbReference>
<dbReference type="NCBIfam" id="TIGR01351">
    <property type="entry name" value="adk"/>
    <property type="match status" value="1"/>
</dbReference>
<dbReference type="PANTHER" id="PTHR23359">
    <property type="entry name" value="NUCLEOTIDE KINASE"/>
    <property type="match status" value="1"/>
</dbReference>
<dbReference type="Pfam" id="PF00406">
    <property type="entry name" value="ADK"/>
    <property type="match status" value="1"/>
</dbReference>
<dbReference type="Pfam" id="PF05191">
    <property type="entry name" value="ADK_lid"/>
    <property type="match status" value="1"/>
</dbReference>
<dbReference type="PRINTS" id="PR00094">
    <property type="entry name" value="ADENYLTKNASE"/>
</dbReference>
<dbReference type="SUPFAM" id="SSF57774">
    <property type="entry name" value="Microbial and mitochondrial ADK, insert 'zinc finger' domain"/>
    <property type="match status" value="1"/>
</dbReference>
<dbReference type="SUPFAM" id="SSF52540">
    <property type="entry name" value="P-loop containing nucleoside triphosphate hydrolases"/>
    <property type="match status" value="1"/>
</dbReference>
<dbReference type="PROSITE" id="PS00113">
    <property type="entry name" value="ADENYLATE_KINASE"/>
    <property type="match status" value="1"/>
</dbReference>
<gene>
    <name evidence="1" type="primary">ADK2</name>
    <name type="synonym">AKY3</name>
    <name type="ordered locus">YER170W</name>
</gene>
<name>KAD3_YEASX</name>